<gene>
    <name type="primary">budA</name>
</gene>
<dbReference type="EC" id="4.1.1.5"/>
<dbReference type="EMBL" id="L04507">
    <property type="protein sequence ID" value="AAA25054.1"/>
    <property type="molecule type" value="Genomic_DNA"/>
</dbReference>
<dbReference type="PIR" id="C47069">
    <property type="entry name" value="C47069"/>
</dbReference>
<dbReference type="RefSeq" id="WP_041145972.1">
    <property type="nucleotide sequence ID" value="NZ_BJNO01000038.1"/>
</dbReference>
<dbReference type="SMR" id="Q04518"/>
<dbReference type="GeneID" id="57504478"/>
<dbReference type="OrthoDB" id="8612680at2"/>
<dbReference type="UniPathway" id="UPA00626">
    <property type="reaction ID" value="UER00678"/>
</dbReference>
<dbReference type="GO" id="GO:0047605">
    <property type="term" value="F:acetolactate decarboxylase activity"/>
    <property type="evidence" value="ECO:0007669"/>
    <property type="project" value="UniProtKB-EC"/>
</dbReference>
<dbReference type="GO" id="GO:0045151">
    <property type="term" value="P:acetoin biosynthetic process"/>
    <property type="evidence" value="ECO:0007669"/>
    <property type="project" value="UniProtKB-KW"/>
</dbReference>
<dbReference type="CDD" id="cd17299">
    <property type="entry name" value="acetolactate_decarboxylase"/>
    <property type="match status" value="1"/>
</dbReference>
<dbReference type="Gene3D" id="3.30.1330.80">
    <property type="entry name" value="Hypothetical protein, similar to alpha- acetolactate decarboxylase, domain 2"/>
    <property type="match status" value="2"/>
</dbReference>
<dbReference type="InterPro" id="IPR005128">
    <property type="entry name" value="Acetolactate_a_deCO2ase"/>
</dbReference>
<dbReference type="NCBIfam" id="TIGR01252">
    <property type="entry name" value="acetolac_decarb"/>
    <property type="match status" value="1"/>
</dbReference>
<dbReference type="PANTHER" id="PTHR35524">
    <property type="entry name" value="ALPHA-ACETOLACTATE DECARBOXYLASE"/>
    <property type="match status" value="1"/>
</dbReference>
<dbReference type="PANTHER" id="PTHR35524:SF1">
    <property type="entry name" value="ALPHA-ACETOLACTATE DECARBOXYLASE"/>
    <property type="match status" value="1"/>
</dbReference>
<dbReference type="Pfam" id="PF03306">
    <property type="entry name" value="AAL_decarboxy"/>
    <property type="match status" value="1"/>
</dbReference>
<dbReference type="PIRSF" id="PIRSF001332">
    <property type="entry name" value="Acetolac_decarb"/>
    <property type="match status" value="1"/>
</dbReference>
<dbReference type="SUPFAM" id="SSF117856">
    <property type="entry name" value="AF0104/ALDC/Ptd012-like"/>
    <property type="match status" value="1"/>
</dbReference>
<proteinExistence type="inferred from homology"/>
<sequence>MNHYPECTCQESLCETVRGFSAHHPDSVIYQTSLMSALLSGVYEGSTTIADLLTHGDFGLGTFNELDGELIAFSSEVYQLRADGSARKARADQKTPFAVMTWFRPQYRKTFDHPVSRQQLHDVIDQQIPSDNLFCALHIDGHFRHAHTRTVPRQTPPYRAMTDVLDDQPVFRFNQRKGTLVGFRTPQHMQGLNVAGYHEHFITDDRQGGGHLLDYQLDSGVLTFGEIHKLMIDLPADSAFLQADLHPDNLDAAIRAVEN</sequence>
<feature type="chain" id="PRO_0000218440" description="Alpha-acetolactate decarboxylase">
    <location>
        <begin position="1"/>
        <end position="259"/>
    </location>
</feature>
<comment type="function">
    <text>Converts acetolactate into acetoin, which can be excreted by the cells. This may be a mechanism for controlling the internal pH of cells in the stationary stage.</text>
</comment>
<comment type="catalytic activity">
    <reaction>
        <text>(2S)-2-acetolactate + H(+) = (R)-acetoin + CO2</text>
        <dbReference type="Rhea" id="RHEA:21580"/>
        <dbReference type="ChEBI" id="CHEBI:15378"/>
        <dbReference type="ChEBI" id="CHEBI:15686"/>
        <dbReference type="ChEBI" id="CHEBI:16526"/>
        <dbReference type="ChEBI" id="CHEBI:58476"/>
        <dbReference type="EC" id="4.1.1.5"/>
    </reaction>
</comment>
<comment type="pathway">
    <text>Polyol metabolism; (R,R)-butane-2,3-diol biosynthesis; (R,R)-butane-2,3-diol from pyruvate: step 2/3.</text>
</comment>
<comment type="similarity">
    <text evidence="1">Belongs to the alpha-acetolactate decarboxylase family.</text>
</comment>
<evidence type="ECO:0000305" key="1"/>
<protein>
    <recommendedName>
        <fullName>Alpha-acetolactate decarboxylase</fullName>
        <ecNumber>4.1.1.5</ecNumber>
    </recommendedName>
</protein>
<accession>Q04518</accession>
<reference key="1">
    <citation type="journal article" date="1993" name="J. Bacteriol.">
        <title>Characterization of the genes of the 2,3-butanediol operons from Klebsiella terrigena and Enterobacter aerogenes.</title>
        <authorList>
            <person name="Blomqvist K."/>
            <person name="Nikkola M."/>
            <person name="Lehtovaara P."/>
            <person name="Suihko M.-L."/>
            <person name="Airaksinen U."/>
            <person name="Straby K.B."/>
            <person name="Knowles J.K.C."/>
            <person name="Penttilae M.E."/>
        </authorList>
    </citation>
    <scope>NUCLEOTIDE SEQUENCE [GENOMIC DNA]</scope>
    <source>
        <strain>VTT-E-74023</strain>
    </source>
</reference>
<keyword id="KW-0005">Acetoin biosynthesis</keyword>
<keyword id="KW-0210">Decarboxylase</keyword>
<keyword id="KW-0456">Lyase</keyword>
<organism>
    <name type="scientific">Raoultella terrigena</name>
    <name type="common">Klebsiella terrigena</name>
    <dbReference type="NCBI Taxonomy" id="577"/>
    <lineage>
        <taxon>Bacteria</taxon>
        <taxon>Pseudomonadati</taxon>
        <taxon>Pseudomonadota</taxon>
        <taxon>Gammaproteobacteria</taxon>
        <taxon>Enterobacterales</taxon>
        <taxon>Enterobacteriaceae</taxon>
        <taxon>Klebsiella/Raoultella group</taxon>
        <taxon>Raoultella</taxon>
    </lineage>
</organism>
<name>ALDC_RAOTE</name>